<proteinExistence type="evidence at transcript level"/>
<feature type="chain" id="PRO_0000136758" description="Large ribosomal subunit protein eL8z">
    <location>
        <begin position="1"/>
        <end position="258"/>
    </location>
</feature>
<feature type="region of interest" description="Disordered" evidence="1">
    <location>
        <begin position="1"/>
        <end position="20"/>
    </location>
</feature>
<keyword id="KW-1185">Reference proteome</keyword>
<keyword id="KW-0687">Ribonucleoprotein</keyword>
<keyword id="KW-0689">Ribosomal protein</keyword>
<dbReference type="EMBL" id="D12631">
    <property type="protein sequence ID" value="BAA02156.1"/>
    <property type="molecule type" value="mRNA"/>
</dbReference>
<dbReference type="EMBL" id="AP003884">
    <property type="protein sequence ID" value="BAD01672.1"/>
    <property type="molecule type" value="Genomic_DNA"/>
</dbReference>
<dbReference type="EMBL" id="AP004637">
    <property type="protein sequence ID" value="BAD03264.1"/>
    <property type="molecule type" value="Genomic_DNA"/>
</dbReference>
<dbReference type="EMBL" id="AP008214">
    <property type="protein sequence ID" value="BAF23464.1"/>
    <property type="molecule type" value="Genomic_DNA"/>
</dbReference>
<dbReference type="EMBL" id="AP014964">
    <property type="protein sequence ID" value="BAT04904.1"/>
    <property type="molecule type" value="Genomic_DNA"/>
</dbReference>
<dbReference type="EMBL" id="AK062210">
    <property type="protein sequence ID" value="BAG88244.1"/>
    <property type="molecule type" value="mRNA"/>
</dbReference>
<dbReference type="EMBL" id="AK121204">
    <property type="protein sequence ID" value="BAH00365.1"/>
    <property type="molecule type" value="mRNA"/>
</dbReference>
<dbReference type="PIR" id="S38360">
    <property type="entry name" value="S38360"/>
</dbReference>
<dbReference type="RefSeq" id="NP_001390459.1">
    <property type="nucleotide sequence ID" value="NM_001403530.1"/>
</dbReference>
<dbReference type="RefSeq" id="XP_015611976.1">
    <property type="nucleotide sequence ID" value="XM_015756490.1"/>
</dbReference>
<dbReference type="RefSeq" id="XP_015650875.1">
    <property type="nucleotide sequence ID" value="XM_015795389.1"/>
</dbReference>
<dbReference type="SMR" id="P35685"/>
<dbReference type="FunCoup" id="P35685">
    <property type="interactions" value="2637"/>
</dbReference>
<dbReference type="STRING" id="39947.P35685"/>
<dbReference type="PaxDb" id="39947-P35685"/>
<dbReference type="EnsemblPlants" id="Os08t0326400-01">
    <property type="protein sequence ID" value="Os08t0326400-01"/>
    <property type="gene ID" value="Os08g0326400"/>
</dbReference>
<dbReference type="EnsemblPlants" id="Os09t0507800-01">
    <property type="protein sequence ID" value="Os09t0507800-01"/>
    <property type="gene ID" value="Os09g0507800"/>
</dbReference>
<dbReference type="GeneID" id="4345279"/>
<dbReference type="Gramene" id="Os08t0326400-01">
    <property type="protein sequence ID" value="Os08t0326400-01"/>
    <property type="gene ID" value="Os08g0326400"/>
</dbReference>
<dbReference type="Gramene" id="Os09t0507800-01">
    <property type="protein sequence ID" value="Os09t0507800-01"/>
    <property type="gene ID" value="Os09g0507800"/>
</dbReference>
<dbReference type="KEGG" id="dosa:Os08g0326400"/>
<dbReference type="eggNOG" id="KOG3166">
    <property type="taxonomic scope" value="Eukaryota"/>
</dbReference>
<dbReference type="HOGENOM" id="CLU_055193_0_1_1"/>
<dbReference type="InParanoid" id="P35685"/>
<dbReference type="OMA" id="RMVKWPA"/>
<dbReference type="OrthoDB" id="1882850at2759"/>
<dbReference type="Proteomes" id="UP000000763">
    <property type="component" value="Chromosome 8"/>
</dbReference>
<dbReference type="Proteomes" id="UP000059680">
    <property type="component" value="Chromosome 8"/>
</dbReference>
<dbReference type="ExpressionAtlas" id="P35685">
    <property type="expression patterns" value="baseline and differential"/>
</dbReference>
<dbReference type="GO" id="GO:1990904">
    <property type="term" value="C:ribonucleoprotein complex"/>
    <property type="evidence" value="ECO:0007669"/>
    <property type="project" value="UniProtKB-KW"/>
</dbReference>
<dbReference type="GO" id="GO:0005840">
    <property type="term" value="C:ribosome"/>
    <property type="evidence" value="ECO:0007669"/>
    <property type="project" value="UniProtKB-KW"/>
</dbReference>
<dbReference type="GO" id="GO:0003723">
    <property type="term" value="F:RNA binding"/>
    <property type="evidence" value="ECO:0007669"/>
    <property type="project" value="InterPro"/>
</dbReference>
<dbReference type="GO" id="GO:0042254">
    <property type="term" value="P:ribosome biogenesis"/>
    <property type="evidence" value="ECO:0007669"/>
    <property type="project" value="InterPro"/>
</dbReference>
<dbReference type="FunFam" id="3.30.1330.30:FF:000003">
    <property type="entry name" value="60S ribosomal protein L7a"/>
    <property type="match status" value="1"/>
</dbReference>
<dbReference type="Gene3D" id="3.30.1330.30">
    <property type="match status" value="1"/>
</dbReference>
<dbReference type="InterPro" id="IPR050257">
    <property type="entry name" value="eL8/uL1-like"/>
</dbReference>
<dbReference type="InterPro" id="IPR029064">
    <property type="entry name" value="Ribosomal_eL30-like_sf"/>
</dbReference>
<dbReference type="InterPro" id="IPR004037">
    <property type="entry name" value="Ribosomal_eL8-like_CS"/>
</dbReference>
<dbReference type="InterPro" id="IPR004038">
    <property type="entry name" value="Ribosomal_eL8/eL30/eS12/Gad45"/>
</dbReference>
<dbReference type="InterPro" id="IPR018492">
    <property type="entry name" value="Ribosomal_eL8/Nhp2"/>
</dbReference>
<dbReference type="InterPro" id="IPR001921">
    <property type="entry name" value="Ribosomal_eL8_euk"/>
</dbReference>
<dbReference type="PANTHER" id="PTHR23105">
    <property type="entry name" value="RIBOSOMAL PROTEIN L7AE FAMILY MEMBER"/>
    <property type="match status" value="1"/>
</dbReference>
<dbReference type="Pfam" id="PF01248">
    <property type="entry name" value="Ribosomal_L7Ae"/>
    <property type="match status" value="1"/>
</dbReference>
<dbReference type="PRINTS" id="PR00881">
    <property type="entry name" value="L7ARS6FAMILY"/>
</dbReference>
<dbReference type="PRINTS" id="PR00882">
    <property type="entry name" value="RIBOSOMALL7A"/>
</dbReference>
<dbReference type="SUPFAM" id="SSF55315">
    <property type="entry name" value="L30e-like"/>
    <property type="match status" value="1"/>
</dbReference>
<dbReference type="PROSITE" id="PS01082">
    <property type="entry name" value="RIBOSOMAL_L7AE"/>
    <property type="match status" value="1"/>
</dbReference>
<accession>P35685</accession>
<accession>Q0J0I3</accession>
<accession>Q8H4Y2</accession>
<comment type="similarity">
    <text evidence="2">Belongs to the eukaryotic ribosomal protein eL8 family.</text>
</comment>
<sequence>MAPKRGGRAPVPAKKKTEKVTNPLFEKRPKQFGIGGALPPKKDLHRFVKWPKVVRIQRQRRILKQRLKVPPALNQFTRTLDKNLATNLFKMLLKYRPEDKAAKKERLLKRAQAEAEGKTVEAKKPIVVKYGLNHVTYLIEQSKAQLVVIAHDVDPIELVVWLPALCRKMEVPYCIVKGKARLGSIVHKKTASVLCLTTVKNEDKLEFSKILEAIKANFNDKFDEVRKKWGGGVMGSKSQAKTKAREKLLAKEAAQRMT</sequence>
<organism>
    <name type="scientific">Oryza sativa subsp. japonica</name>
    <name type="common">Rice</name>
    <dbReference type="NCBI Taxonomy" id="39947"/>
    <lineage>
        <taxon>Eukaryota</taxon>
        <taxon>Viridiplantae</taxon>
        <taxon>Streptophyta</taxon>
        <taxon>Embryophyta</taxon>
        <taxon>Tracheophyta</taxon>
        <taxon>Spermatophyta</taxon>
        <taxon>Magnoliopsida</taxon>
        <taxon>Liliopsida</taxon>
        <taxon>Poales</taxon>
        <taxon>Poaceae</taxon>
        <taxon>BOP clade</taxon>
        <taxon>Oryzoideae</taxon>
        <taxon>Oryzeae</taxon>
        <taxon>Oryzinae</taxon>
        <taxon>Oryza</taxon>
        <taxon>Oryza sativa</taxon>
    </lineage>
</organism>
<name>RL7A1_ORYSJ</name>
<protein>
    <recommendedName>
        <fullName evidence="2">Large ribosomal subunit protein eL8z</fullName>
    </recommendedName>
    <alternativeName>
        <fullName>60S ribosomal protein L7a-1</fullName>
    </alternativeName>
</protein>
<evidence type="ECO:0000256" key="1">
    <source>
        <dbReference type="SAM" id="MobiDB-lite"/>
    </source>
</evidence>
<evidence type="ECO:0000305" key="2"/>
<reference key="1">
    <citation type="journal article" date="1993" name="Biochim. Biophys. Acta">
        <title>The primary structure of two proteins from the large ribosomal subunit of rice.</title>
        <authorList>
            <person name="Nishi R."/>
            <person name="Kidou S."/>
            <person name="Uchimiya H."/>
            <person name="Kato A."/>
        </authorList>
    </citation>
    <scope>NUCLEOTIDE SEQUENCE [MRNA]</scope>
</reference>
<reference key="2">
    <citation type="journal article" date="2005" name="Nature">
        <title>The map-based sequence of the rice genome.</title>
        <authorList>
            <consortium name="International rice genome sequencing project (IRGSP)"/>
        </authorList>
    </citation>
    <scope>NUCLEOTIDE SEQUENCE [LARGE SCALE GENOMIC DNA]</scope>
    <source>
        <strain>cv. Nipponbare</strain>
    </source>
</reference>
<reference key="3">
    <citation type="journal article" date="2008" name="Nucleic Acids Res.">
        <title>The rice annotation project database (RAP-DB): 2008 update.</title>
        <authorList>
            <consortium name="The rice annotation project (RAP)"/>
        </authorList>
    </citation>
    <scope>GENOME REANNOTATION</scope>
    <source>
        <strain>cv. Nipponbare</strain>
    </source>
</reference>
<reference key="4">
    <citation type="journal article" date="2013" name="Rice">
        <title>Improvement of the Oryza sativa Nipponbare reference genome using next generation sequence and optical map data.</title>
        <authorList>
            <person name="Kawahara Y."/>
            <person name="de la Bastide M."/>
            <person name="Hamilton J.P."/>
            <person name="Kanamori H."/>
            <person name="McCombie W.R."/>
            <person name="Ouyang S."/>
            <person name="Schwartz D.C."/>
            <person name="Tanaka T."/>
            <person name="Wu J."/>
            <person name="Zhou S."/>
            <person name="Childs K.L."/>
            <person name="Davidson R.M."/>
            <person name="Lin H."/>
            <person name="Quesada-Ocampo L."/>
            <person name="Vaillancourt B."/>
            <person name="Sakai H."/>
            <person name="Lee S.S."/>
            <person name="Kim J."/>
            <person name="Numa H."/>
            <person name="Itoh T."/>
            <person name="Buell C.R."/>
            <person name="Matsumoto T."/>
        </authorList>
    </citation>
    <scope>GENOME REANNOTATION</scope>
    <source>
        <strain>cv. Nipponbare</strain>
    </source>
</reference>
<reference key="5">
    <citation type="journal article" date="2003" name="Science">
        <title>Collection, mapping, and annotation of over 28,000 cDNA clones from japonica rice.</title>
        <authorList>
            <consortium name="The rice full-length cDNA consortium"/>
        </authorList>
    </citation>
    <scope>NUCLEOTIDE SEQUENCE [LARGE SCALE MRNA]</scope>
    <source>
        <strain>cv. Nipponbare</strain>
    </source>
</reference>
<gene>
    <name type="primary">RPL7A-1</name>
    <name type="ordered locus">Os08g0326400</name>
    <name type="ordered locus">LOC_Os08g23710</name>
    <name type="ORF">OJ1136_A10.108</name>
    <name type="ORF">P0703C03.43</name>
</gene>